<evidence type="ECO:0000255" key="1">
    <source>
        <dbReference type="HAMAP-Rule" id="MF_00059"/>
    </source>
</evidence>
<dbReference type="EC" id="2.7.7.6" evidence="1"/>
<dbReference type="EMBL" id="CP000034">
    <property type="protein sequence ID" value="ABB63449.1"/>
    <property type="molecule type" value="Genomic_DNA"/>
</dbReference>
<dbReference type="RefSeq" id="WP_001162097.1">
    <property type="nucleotide sequence ID" value="NC_007606.1"/>
</dbReference>
<dbReference type="RefSeq" id="YP_404940.1">
    <property type="nucleotide sequence ID" value="NC_007606.1"/>
</dbReference>
<dbReference type="SMR" id="Q32B56"/>
<dbReference type="STRING" id="300267.SDY_3471"/>
<dbReference type="EnsemblBacteria" id="ABB63449">
    <property type="protein sequence ID" value="ABB63449"/>
    <property type="gene ID" value="SDY_3471"/>
</dbReference>
<dbReference type="KEGG" id="sdy:SDY_3471"/>
<dbReference type="PATRIC" id="fig|300267.13.peg.4124"/>
<dbReference type="HOGENOM" id="CLU_053084_0_0_6"/>
<dbReference type="Proteomes" id="UP000002716">
    <property type="component" value="Chromosome"/>
</dbReference>
<dbReference type="GO" id="GO:0005737">
    <property type="term" value="C:cytoplasm"/>
    <property type="evidence" value="ECO:0007669"/>
    <property type="project" value="UniProtKB-ARBA"/>
</dbReference>
<dbReference type="GO" id="GO:0000428">
    <property type="term" value="C:DNA-directed RNA polymerase complex"/>
    <property type="evidence" value="ECO:0007669"/>
    <property type="project" value="UniProtKB-KW"/>
</dbReference>
<dbReference type="GO" id="GO:0003677">
    <property type="term" value="F:DNA binding"/>
    <property type="evidence" value="ECO:0007669"/>
    <property type="project" value="UniProtKB-UniRule"/>
</dbReference>
<dbReference type="GO" id="GO:0003899">
    <property type="term" value="F:DNA-directed RNA polymerase activity"/>
    <property type="evidence" value="ECO:0007669"/>
    <property type="project" value="UniProtKB-UniRule"/>
</dbReference>
<dbReference type="GO" id="GO:0046983">
    <property type="term" value="F:protein dimerization activity"/>
    <property type="evidence" value="ECO:0007669"/>
    <property type="project" value="InterPro"/>
</dbReference>
<dbReference type="GO" id="GO:0006351">
    <property type="term" value="P:DNA-templated transcription"/>
    <property type="evidence" value="ECO:0007669"/>
    <property type="project" value="UniProtKB-UniRule"/>
</dbReference>
<dbReference type="CDD" id="cd06928">
    <property type="entry name" value="RNAP_alpha_NTD"/>
    <property type="match status" value="1"/>
</dbReference>
<dbReference type="FunFam" id="1.10.150.20:FF:000001">
    <property type="entry name" value="DNA-directed RNA polymerase subunit alpha"/>
    <property type="match status" value="1"/>
</dbReference>
<dbReference type="FunFam" id="2.170.120.12:FF:000001">
    <property type="entry name" value="DNA-directed RNA polymerase subunit alpha"/>
    <property type="match status" value="1"/>
</dbReference>
<dbReference type="Gene3D" id="1.10.150.20">
    <property type="entry name" value="5' to 3' exonuclease, C-terminal subdomain"/>
    <property type="match status" value="1"/>
</dbReference>
<dbReference type="Gene3D" id="2.170.120.12">
    <property type="entry name" value="DNA-directed RNA polymerase, insert domain"/>
    <property type="match status" value="1"/>
</dbReference>
<dbReference type="Gene3D" id="3.30.1360.10">
    <property type="entry name" value="RNA polymerase, RBP11-like subunit"/>
    <property type="match status" value="1"/>
</dbReference>
<dbReference type="HAMAP" id="MF_00059">
    <property type="entry name" value="RNApol_bact_RpoA"/>
    <property type="match status" value="1"/>
</dbReference>
<dbReference type="InterPro" id="IPR011262">
    <property type="entry name" value="DNA-dir_RNA_pol_insert"/>
</dbReference>
<dbReference type="InterPro" id="IPR011263">
    <property type="entry name" value="DNA-dir_RNA_pol_RpoA/D/Rpb3"/>
</dbReference>
<dbReference type="InterPro" id="IPR011773">
    <property type="entry name" value="DNA-dir_RpoA"/>
</dbReference>
<dbReference type="InterPro" id="IPR036603">
    <property type="entry name" value="RBP11-like"/>
</dbReference>
<dbReference type="InterPro" id="IPR011260">
    <property type="entry name" value="RNAP_asu_C"/>
</dbReference>
<dbReference type="InterPro" id="IPR036643">
    <property type="entry name" value="RNApol_insert_sf"/>
</dbReference>
<dbReference type="NCBIfam" id="NF003513">
    <property type="entry name" value="PRK05182.1-2"/>
    <property type="match status" value="1"/>
</dbReference>
<dbReference type="NCBIfam" id="NF003519">
    <property type="entry name" value="PRK05182.2-5"/>
    <property type="match status" value="1"/>
</dbReference>
<dbReference type="NCBIfam" id="TIGR02027">
    <property type="entry name" value="rpoA"/>
    <property type="match status" value="1"/>
</dbReference>
<dbReference type="Pfam" id="PF01000">
    <property type="entry name" value="RNA_pol_A_bac"/>
    <property type="match status" value="1"/>
</dbReference>
<dbReference type="Pfam" id="PF03118">
    <property type="entry name" value="RNA_pol_A_CTD"/>
    <property type="match status" value="1"/>
</dbReference>
<dbReference type="Pfam" id="PF01193">
    <property type="entry name" value="RNA_pol_L"/>
    <property type="match status" value="1"/>
</dbReference>
<dbReference type="SMART" id="SM00662">
    <property type="entry name" value="RPOLD"/>
    <property type="match status" value="1"/>
</dbReference>
<dbReference type="SUPFAM" id="SSF47789">
    <property type="entry name" value="C-terminal domain of RNA polymerase alpha subunit"/>
    <property type="match status" value="1"/>
</dbReference>
<dbReference type="SUPFAM" id="SSF56553">
    <property type="entry name" value="Insert subdomain of RNA polymerase alpha subunit"/>
    <property type="match status" value="1"/>
</dbReference>
<dbReference type="SUPFAM" id="SSF55257">
    <property type="entry name" value="RBP11-like subunits of RNA polymerase"/>
    <property type="match status" value="1"/>
</dbReference>
<accession>Q32B56</accession>
<comment type="function">
    <text evidence="1">DNA-dependent RNA polymerase catalyzes the transcription of DNA into RNA using the four ribonucleoside triphosphates as substrates.</text>
</comment>
<comment type="catalytic activity">
    <reaction evidence="1">
        <text>RNA(n) + a ribonucleoside 5'-triphosphate = RNA(n+1) + diphosphate</text>
        <dbReference type="Rhea" id="RHEA:21248"/>
        <dbReference type="Rhea" id="RHEA-COMP:14527"/>
        <dbReference type="Rhea" id="RHEA-COMP:17342"/>
        <dbReference type="ChEBI" id="CHEBI:33019"/>
        <dbReference type="ChEBI" id="CHEBI:61557"/>
        <dbReference type="ChEBI" id="CHEBI:140395"/>
        <dbReference type="EC" id="2.7.7.6"/>
    </reaction>
</comment>
<comment type="subunit">
    <text evidence="1">Homodimer. The RNAP catalytic core consists of 2 alpha, 1 beta, 1 beta' and 1 omega subunit. When a sigma factor is associated with the core the holoenzyme is formed, which can initiate transcription.</text>
</comment>
<comment type="domain">
    <text evidence="1">The N-terminal domain is essential for RNAP assembly and basal transcription, whereas the C-terminal domain is involved in interaction with transcriptional regulators and with upstream promoter elements.</text>
</comment>
<comment type="similarity">
    <text evidence="1">Belongs to the RNA polymerase alpha chain family.</text>
</comment>
<reference key="1">
    <citation type="journal article" date="2005" name="Nucleic Acids Res.">
        <title>Genome dynamics and diversity of Shigella species, the etiologic agents of bacillary dysentery.</title>
        <authorList>
            <person name="Yang F."/>
            <person name="Yang J."/>
            <person name="Zhang X."/>
            <person name="Chen L."/>
            <person name="Jiang Y."/>
            <person name="Yan Y."/>
            <person name="Tang X."/>
            <person name="Wang J."/>
            <person name="Xiong Z."/>
            <person name="Dong J."/>
            <person name="Xue Y."/>
            <person name="Zhu Y."/>
            <person name="Xu X."/>
            <person name="Sun L."/>
            <person name="Chen S."/>
            <person name="Nie H."/>
            <person name="Peng J."/>
            <person name="Xu J."/>
            <person name="Wang Y."/>
            <person name="Yuan Z."/>
            <person name="Wen Y."/>
            <person name="Yao Z."/>
            <person name="Shen Y."/>
            <person name="Qiang B."/>
            <person name="Hou Y."/>
            <person name="Yu J."/>
            <person name="Jin Q."/>
        </authorList>
    </citation>
    <scope>NUCLEOTIDE SEQUENCE [LARGE SCALE GENOMIC DNA]</scope>
    <source>
        <strain>Sd197</strain>
    </source>
</reference>
<organism>
    <name type="scientific">Shigella dysenteriae serotype 1 (strain Sd197)</name>
    <dbReference type="NCBI Taxonomy" id="300267"/>
    <lineage>
        <taxon>Bacteria</taxon>
        <taxon>Pseudomonadati</taxon>
        <taxon>Pseudomonadota</taxon>
        <taxon>Gammaproteobacteria</taxon>
        <taxon>Enterobacterales</taxon>
        <taxon>Enterobacteriaceae</taxon>
        <taxon>Shigella</taxon>
    </lineage>
</organism>
<sequence length="329" mass="36540">MQGSVTEFLKPRLVDIEQVSSTHAKVTLEPLERGFGHTLGNALRRILLSSMPGCAVTEVEIDGVLHEYSTKEGVQEDILEILLNLKGLAVRVQGKDEVILTLNKSGIGPVTAADITHDGDVEIVKPQHVICHLTDENASISMRIKVRRGRGYVPASTRIHSEEDERPIGRLLVDACYSPVERIAYNVEAARVEQRTDLDKLVIEMETNGTIDPEEAIRRAATILAEQLEAFVDLRDVRQPEVKEEKPEFDPILLRPVDDLELTVRSANCLKAEAIHYIGDLVQRTEVELLKTPNLGKKSLTEIKDVLASRGLSLGMRLENWPPASIADE</sequence>
<proteinExistence type="inferred from homology"/>
<feature type="chain" id="PRO_0000225301" description="DNA-directed RNA polymerase subunit alpha">
    <location>
        <begin position="1"/>
        <end position="329"/>
    </location>
</feature>
<feature type="region of interest" description="Alpha N-terminal domain (alpha-NTD)" evidence="1">
    <location>
        <begin position="1"/>
        <end position="235"/>
    </location>
</feature>
<feature type="region of interest" description="Alpha C-terminal domain (alpha-CTD)" evidence="1">
    <location>
        <begin position="249"/>
        <end position="329"/>
    </location>
</feature>
<name>RPOA_SHIDS</name>
<keyword id="KW-0240">DNA-directed RNA polymerase</keyword>
<keyword id="KW-0548">Nucleotidyltransferase</keyword>
<keyword id="KW-1185">Reference proteome</keyword>
<keyword id="KW-0804">Transcription</keyword>
<keyword id="KW-0808">Transferase</keyword>
<gene>
    <name evidence="1" type="primary">rpoA</name>
    <name type="ordered locus">SDY_3471</name>
</gene>
<protein>
    <recommendedName>
        <fullName evidence="1">DNA-directed RNA polymerase subunit alpha</fullName>
        <shortName evidence="1">RNAP subunit alpha</shortName>
        <ecNumber evidence="1">2.7.7.6</ecNumber>
    </recommendedName>
    <alternativeName>
        <fullName evidence="1">RNA polymerase subunit alpha</fullName>
    </alternativeName>
    <alternativeName>
        <fullName evidence="1">Transcriptase subunit alpha</fullName>
    </alternativeName>
</protein>